<dbReference type="EC" id="3.2.1.21"/>
<dbReference type="EMBL" id="M22476">
    <property type="protein sequence ID" value="AAA34315.1"/>
    <property type="molecule type" value="Genomic_DNA"/>
</dbReference>
<dbReference type="PIR" id="B45956">
    <property type="entry name" value="B45956"/>
</dbReference>
<dbReference type="SMR" id="P22507"/>
<dbReference type="CAZy" id="GH3">
    <property type="family name" value="Glycoside Hydrolase Family 3"/>
</dbReference>
<dbReference type="GlyCosmos" id="P22507">
    <property type="glycosylation" value="11 sites, No reported glycans"/>
</dbReference>
<dbReference type="UniPathway" id="UPA00696"/>
<dbReference type="GO" id="GO:0008422">
    <property type="term" value="F:beta-glucosidase activity"/>
    <property type="evidence" value="ECO:0007669"/>
    <property type="project" value="UniProtKB-EC"/>
</dbReference>
<dbReference type="GO" id="GO:0030245">
    <property type="term" value="P:cellulose catabolic process"/>
    <property type="evidence" value="ECO:0007669"/>
    <property type="project" value="UniProtKB-UniPathway"/>
</dbReference>
<dbReference type="FunFam" id="3.20.20.300:FF:000002">
    <property type="entry name" value="Probable beta-glucosidase"/>
    <property type="match status" value="1"/>
</dbReference>
<dbReference type="Gene3D" id="3.40.50.1700">
    <property type="entry name" value="Glycoside hydrolase family 3 C-terminal domain"/>
    <property type="match status" value="1"/>
</dbReference>
<dbReference type="Gene3D" id="3.20.20.300">
    <property type="entry name" value="Glycoside hydrolase, family 3, N-terminal domain"/>
    <property type="match status" value="1"/>
</dbReference>
<dbReference type="Gene3D" id="2.60.40.10">
    <property type="entry name" value="Immunoglobulins"/>
    <property type="match status" value="1"/>
</dbReference>
<dbReference type="InterPro" id="IPR050288">
    <property type="entry name" value="Cellulose_deg_GH3"/>
</dbReference>
<dbReference type="InterPro" id="IPR026891">
    <property type="entry name" value="Fn3-like"/>
</dbReference>
<dbReference type="InterPro" id="IPR019800">
    <property type="entry name" value="Glyco_hydro_3_AS"/>
</dbReference>
<dbReference type="InterPro" id="IPR002772">
    <property type="entry name" value="Glyco_hydro_3_C"/>
</dbReference>
<dbReference type="InterPro" id="IPR036881">
    <property type="entry name" value="Glyco_hydro_3_C_sf"/>
</dbReference>
<dbReference type="InterPro" id="IPR001764">
    <property type="entry name" value="Glyco_hydro_3_N"/>
</dbReference>
<dbReference type="InterPro" id="IPR036962">
    <property type="entry name" value="Glyco_hydro_3_N_sf"/>
</dbReference>
<dbReference type="InterPro" id="IPR017853">
    <property type="entry name" value="Glycoside_hydrolase_SF"/>
</dbReference>
<dbReference type="InterPro" id="IPR013783">
    <property type="entry name" value="Ig-like_fold"/>
</dbReference>
<dbReference type="PANTHER" id="PTHR42715">
    <property type="entry name" value="BETA-GLUCOSIDASE"/>
    <property type="match status" value="1"/>
</dbReference>
<dbReference type="PANTHER" id="PTHR42715:SF2">
    <property type="entry name" value="BETA-GLUCOSIDASE F-RELATED"/>
    <property type="match status" value="1"/>
</dbReference>
<dbReference type="Pfam" id="PF14310">
    <property type="entry name" value="Fn3-like"/>
    <property type="match status" value="1"/>
</dbReference>
<dbReference type="Pfam" id="PF00933">
    <property type="entry name" value="Glyco_hydro_3"/>
    <property type="match status" value="1"/>
</dbReference>
<dbReference type="Pfam" id="PF01915">
    <property type="entry name" value="Glyco_hydro_3_C"/>
    <property type="match status" value="1"/>
</dbReference>
<dbReference type="PRINTS" id="PR00133">
    <property type="entry name" value="GLHYDRLASE3"/>
</dbReference>
<dbReference type="SMART" id="SM01217">
    <property type="entry name" value="Fn3_like"/>
    <property type="match status" value="1"/>
</dbReference>
<dbReference type="SUPFAM" id="SSF51445">
    <property type="entry name" value="(Trans)glycosidases"/>
    <property type="match status" value="1"/>
</dbReference>
<dbReference type="SUPFAM" id="SSF52279">
    <property type="entry name" value="Beta-D-glucan exohydrolase, C-terminal domain"/>
    <property type="match status" value="1"/>
</dbReference>
<dbReference type="PROSITE" id="PS00775">
    <property type="entry name" value="GLYCOSYL_HYDROL_F3"/>
    <property type="match status" value="1"/>
</dbReference>
<protein>
    <recommendedName>
        <fullName>Beta-glucosidase 2</fullName>
        <ecNumber>3.2.1.21</ecNumber>
    </recommendedName>
    <alternativeName>
        <fullName>Beta-D-glucoside glucohydrolase</fullName>
    </alternativeName>
    <alternativeName>
        <fullName>Cellobiase</fullName>
    </alternativeName>
    <alternativeName>
        <fullName>Gentiobiase</fullName>
    </alternativeName>
</protein>
<sequence length="880" mass="96799">MLLILELLVLIIGLGVALPVQTHNLTDNQGFDEESSQWISPHYYPTPQGGRLQGVWQDAYTKAKALVSQMTIVEKVNLTTGTGWQLGPCVGNTGSVPRFGIPNLCLQDGPLGVRLTDFSTGYPSGMATGATFNKDLFLQRGQALGHEFNSKGVHIALGPAVGPLGVKARGGRNFEAFGSDPYLQGIAAAATIKGLQENNVMACVKHFIGNEQDIYRQPSNSKVDPEYDPATKESISANIPDRAMHELYLWPFADSIRAGVGSVMCSYNRVNNTYSCENSYMINHLLKEELGFQGFVVSDWAAQMSGAYSAISGLDMSMPGELLGGWNTGKSYWGQNLTKAVYNETVPIERLDDMATRILAALYATNSFPTKDRLPNFSSFTTKEYGNEFFVDKTSPVVKVNHFVDPSNDFTEDTALKVAEESIVLLKNEKNTLPISPNKVRKLLLSGIAAGPDPKGYECSDQSCVDGALFEGWGSGSVGYPKYQVTPFEEISANARKNKMQFDYIRESFDLTQVSTVASDAHMSIVVVSAVSGEGYLIIDGNRGDKNNVTLWHNSDNLIKAVAENCANTVVVITSTGQVDVESFADHPNVTAIVWAGPLGDRSGTAIANILFGNANPSGHLPFTVAKSNDDYIPIVTYNPPNGEPEDNTLAEHDLLVDYRYFEEKNIEPRYAFGYGLSYNEYKVSNAKVSAAKKVDEELPQPKLYLAEYSYNKTEEINNPEDAFFPSNARRIQEFLYPYLDSNVTLKDGNYEYPDGYSTEQRTTPIQPGGGLGGNDALWEVAYKVEVDVQNLGNSTDKFVPQLYLKHPEDGKFETPVQLRGFEKVELSPGEKKTVEFELLRRDLSVWDTTRQSWIVESGTYEALIGVAVNDIKTSVLFTI</sequence>
<comment type="catalytic activity">
    <reaction>
        <text>Hydrolysis of terminal, non-reducing beta-D-glucosyl residues with release of beta-D-glucose.</text>
        <dbReference type="EC" id="3.2.1.21"/>
    </reaction>
</comment>
<comment type="pathway">
    <text>Glycan metabolism; cellulose degradation.</text>
</comment>
<comment type="similarity">
    <text evidence="3">Belongs to the glycosyl hydrolase 3 family.</text>
</comment>
<reference key="1">
    <citation type="journal article" date="1988" name="Appl. Environ. Microbiol.">
        <title>Nucleotide sequences of Saccharomycopsis fibuligera genes for extracellular beta-glucosidases as expressed in Saccharomyces cerevisiae.</title>
        <authorList>
            <person name="Machida M."/>
            <person name="Ohtsuki I."/>
            <person name="Fukui S."/>
            <person name="Yamashita I."/>
        </authorList>
    </citation>
    <scope>NUCLEOTIDE SEQUENCE [GENOMIC DNA]</scope>
</reference>
<name>BGL2_SACFI</name>
<keyword id="KW-0119">Carbohydrate metabolism</keyword>
<keyword id="KW-0136">Cellulose degradation</keyword>
<keyword id="KW-0325">Glycoprotein</keyword>
<keyword id="KW-0326">Glycosidase</keyword>
<keyword id="KW-0378">Hydrolase</keyword>
<keyword id="KW-0624">Polysaccharide degradation</keyword>
<keyword id="KW-0732">Signal</keyword>
<proteinExistence type="inferred from homology"/>
<accession>P22507</accession>
<evidence type="ECO:0000250" key="1"/>
<evidence type="ECO:0000255" key="2"/>
<evidence type="ECO:0000305" key="3"/>
<feature type="signal peptide">
    <location>
        <begin position="1"/>
        <end position="17"/>
    </location>
</feature>
<feature type="chain" id="PRO_0000011780" description="Beta-glucosidase 2">
    <location>
        <begin position="18"/>
        <end position="880"/>
    </location>
</feature>
<feature type="active site" evidence="1">
    <location>
        <position position="299"/>
    </location>
</feature>
<feature type="glycosylation site" description="N-linked (GlcNAc...) asparagine" evidence="2">
    <location>
        <position position="24"/>
    </location>
</feature>
<feature type="glycosylation site" description="N-linked (GlcNAc...) asparagine" evidence="2">
    <location>
        <position position="77"/>
    </location>
</feature>
<feature type="glycosylation site" description="N-linked (GlcNAc...) asparagine" evidence="2">
    <location>
        <position position="271"/>
    </location>
</feature>
<feature type="glycosylation site" description="N-linked (GlcNAc...) asparagine" evidence="2">
    <location>
        <position position="336"/>
    </location>
</feature>
<feature type="glycosylation site" description="N-linked (GlcNAc...) asparagine" evidence="2">
    <location>
        <position position="343"/>
    </location>
</feature>
<feature type="glycosylation site" description="N-linked (GlcNAc...) asparagine" evidence="2">
    <location>
        <position position="376"/>
    </location>
</feature>
<feature type="glycosylation site" description="N-linked (GlcNAc...) asparagine" evidence="2">
    <location>
        <position position="548"/>
    </location>
</feature>
<feature type="glycosylation site" description="N-linked (GlcNAc...) asparagine" evidence="2">
    <location>
        <position position="589"/>
    </location>
</feature>
<feature type="glycosylation site" description="N-linked (GlcNAc...) asparagine" evidence="2">
    <location>
        <position position="712"/>
    </location>
</feature>
<feature type="glycosylation site" description="N-linked (GlcNAc...) asparagine" evidence="2">
    <location>
        <position position="743"/>
    </location>
</feature>
<feature type="glycosylation site" description="N-linked (GlcNAc...) asparagine" evidence="2">
    <location>
        <position position="794"/>
    </location>
</feature>
<gene>
    <name type="primary">BGL2</name>
</gene>
<organism>
    <name type="scientific">Saccharomycopsis fibuligera</name>
    <name type="common">Yeast</name>
    <dbReference type="NCBI Taxonomy" id="4944"/>
    <lineage>
        <taxon>Eukaryota</taxon>
        <taxon>Fungi</taxon>
        <taxon>Dikarya</taxon>
        <taxon>Ascomycota</taxon>
        <taxon>Saccharomycotina</taxon>
        <taxon>Saccharomycetes</taxon>
        <taxon>Saccharomycopsidaceae</taxon>
        <taxon>Saccharomycopsis</taxon>
    </lineage>
</organism>